<organism>
    <name type="scientific">Prochlorococcus marinus (strain MIT 9301)</name>
    <dbReference type="NCBI Taxonomy" id="167546"/>
    <lineage>
        <taxon>Bacteria</taxon>
        <taxon>Bacillati</taxon>
        <taxon>Cyanobacteriota</taxon>
        <taxon>Cyanophyceae</taxon>
        <taxon>Synechococcales</taxon>
        <taxon>Prochlorococcaceae</taxon>
        <taxon>Prochlorococcus</taxon>
    </lineage>
</organism>
<comment type="catalytic activity">
    <reaction evidence="1">
        <text>2-(N(omega)-L-arginino)succinate = fumarate + L-arginine</text>
        <dbReference type="Rhea" id="RHEA:24020"/>
        <dbReference type="ChEBI" id="CHEBI:29806"/>
        <dbReference type="ChEBI" id="CHEBI:32682"/>
        <dbReference type="ChEBI" id="CHEBI:57472"/>
        <dbReference type="EC" id="4.3.2.1"/>
    </reaction>
</comment>
<comment type="pathway">
    <text evidence="1">Amino-acid biosynthesis; L-arginine biosynthesis; L-arginine from L-ornithine and carbamoyl phosphate: step 3/3.</text>
</comment>
<comment type="subcellular location">
    <subcellularLocation>
        <location evidence="1">Cytoplasm</location>
    </subcellularLocation>
</comment>
<comment type="similarity">
    <text evidence="1">Belongs to the lyase 1 family. Argininosuccinate lyase subfamily.</text>
</comment>
<evidence type="ECO:0000255" key="1">
    <source>
        <dbReference type="HAMAP-Rule" id="MF_00006"/>
    </source>
</evidence>
<proteinExistence type="inferred from homology"/>
<name>ARLY_PROM0</name>
<reference key="1">
    <citation type="journal article" date="2007" name="PLoS Genet.">
        <title>Patterns and implications of gene gain and loss in the evolution of Prochlorococcus.</title>
        <authorList>
            <person name="Kettler G.C."/>
            <person name="Martiny A.C."/>
            <person name="Huang K."/>
            <person name="Zucker J."/>
            <person name="Coleman M.L."/>
            <person name="Rodrigue S."/>
            <person name="Chen F."/>
            <person name="Lapidus A."/>
            <person name="Ferriera S."/>
            <person name="Johnson J."/>
            <person name="Steglich C."/>
            <person name="Church G.M."/>
            <person name="Richardson P."/>
            <person name="Chisholm S.W."/>
        </authorList>
    </citation>
    <scope>NUCLEOTIDE SEQUENCE [LARGE SCALE GENOMIC DNA]</scope>
    <source>
        <strain>MIT 9301</strain>
    </source>
</reference>
<dbReference type="EC" id="4.3.2.1" evidence="1"/>
<dbReference type="EMBL" id="CP000576">
    <property type="protein sequence ID" value="ABO16634.1"/>
    <property type="molecule type" value="Genomic_DNA"/>
</dbReference>
<dbReference type="RefSeq" id="WP_011862039.1">
    <property type="nucleotide sequence ID" value="NC_009091.1"/>
</dbReference>
<dbReference type="SMR" id="A3PA59"/>
<dbReference type="STRING" id="167546.P9301_00111"/>
<dbReference type="KEGG" id="pmg:P9301_00111"/>
<dbReference type="eggNOG" id="COG0165">
    <property type="taxonomic scope" value="Bacteria"/>
</dbReference>
<dbReference type="HOGENOM" id="CLU_027272_2_3_3"/>
<dbReference type="OrthoDB" id="9769623at2"/>
<dbReference type="UniPathway" id="UPA00068">
    <property type="reaction ID" value="UER00114"/>
</dbReference>
<dbReference type="Proteomes" id="UP000001430">
    <property type="component" value="Chromosome"/>
</dbReference>
<dbReference type="GO" id="GO:0005829">
    <property type="term" value="C:cytosol"/>
    <property type="evidence" value="ECO:0007669"/>
    <property type="project" value="TreeGrafter"/>
</dbReference>
<dbReference type="GO" id="GO:0004056">
    <property type="term" value="F:argininosuccinate lyase activity"/>
    <property type="evidence" value="ECO:0007669"/>
    <property type="project" value="UniProtKB-UniRule"/>
</dbReference>
<dbReference type="GO" id="GO:0042450">
    <property type="term" value="P:arginine biosynthetic process via ornithine"/>
    <property type="evidence" value="ECO:0007669"/>
    <property type="project" value="InterPro"/>
</dbReference>
<dbReference type="GO" id="GO:0006526">
    <property type="term" value="P:L-arginine biosynthetic process"/>
    <property type="evidence" value="ECO:0007669"/>
    <property type="project" value="UniProtKB-UniRule"/>
</dbReference>
<dbReference type="CDD" id="cd01359">
    <property type="entry name" value="Argininosuccinate_lyase"/>
    <property type="match status" value="1"/>
</dbReference>
<dbReference type="FunFam" id="1.10.40.30:FF:000001">
    <property type="entry name" value="Argininosuccinate lyase"/>
    <property type="match status" value="1"/>
</dbReference>
<dbReference type="FunFam" id="1.20.200.10:FF:000015">
    <property type="entry name" value="argininosuccinate lyase isoform X2"/>
    <property type="match status" value="1"/>
</dbReference>
<dbReference type="Gene3D" id="1.10.40.30">
    <property type="entry name" value="Fumarase/aspartase (C-terminal domain)"/>
    <property type="match status" value="1"/>
</dbReference>
<dbReference type="Gene3D" id="1.20.200.10">
    <property type="entry name" value="Fumarase/aspartase (Central domain)"/>
    <property type="match status" value="1"/>
</dbReference>
<dbReference type="Gene3D" id="1.10.275.10">
    <property type="entry name" value="Fumarase/aspartase (N-terminal domain)"/>
    <property type="match status" value="1"/>
</dbReference>
<dbReference type="HAMAP" id="MF_00006">
    <property type="entry name" value="Arg_succ_lyase"/>
    <property type="match status" value="1"/>
</dbReference>
<dbReference type="InterPro" id="IPR029419">
    <property type="entry name" value="Arg_succ_lyase_C"/>
</dbReference>
<dbReference type="InterPro" id="IPR009049">
    <property type="entry name" value="Argininosuccinate_lyase"/>
</dbReference>
<dbReference type="InterPro" id="IPR024083">
    <property type="entry name" value="Fumarase/histidase_N"/>
</dbReference>
<dbReference type="InterPro" id="IPR020557">
    <property type="entry name" value="Fumarate_lyase_CS"/>
</dbReference>
<dbReference type="InterPro" id="IPR000362">
    <property type="entry name" value="Fumarate_lyase_fam"/>
</dbReference>
<dbReference type="InterPro" id="IPR022761">
    <property type="entry name" value="Fumarate_lyase_N"/>
</dbReference>
<dbReference type="InterPro" id="IPR008948">
    <property type="entry name" value="L-Aspartase-like"/>
</dbReference>
<dbReference type="NCBIfam" id="TIGR00838">
    <property type="entry name" value="argH"/>
    <property type="match status" value="1"/>
</dbReference>
<dbReference type="PANTHER" id="PTHR43814">
    <property type="entry name" value="ARGININOSUCCINATE LYASE"/>
    <property type="match status" value="1"/>
</dbReference>
<dbReference type="PANTHER" id="PTHR43814:SF1">
    <property type="entry name" value="ARGININOSUCCINATE LYASE"/>
    <property type="match status" value="1"/>
</dbReference>
<dbReference type="Pfam" id="PF14698">
    <property type="entry name" value="ASL_C2"/>
    <property type="match status" value="1"/>
</dbReference>
<dbReference type="Pfam" id="PF00206">
    <property type="entry name" value="Lyase_1"/>
    <property type="match status" value="1"/>
</dbReference>
<dbReference type="PRINTS" id="PR00145">
    <property type="entry name" value="ARGSUCLYASE"/>
</dbReference>
<dbReference type="PRINTS" id="PR00149">
    <property type="entry name" value="FUMRATELYASE"/>
</dbReference>
<dbReference type="SUPFAM" id="SSF48557">
    <property type="entry name" value="L-aspartase-like"/>
    <property type="match status" value="1"/>
</dbReference>
<dbReference type="PROSITE" id="PS00163">
    <property type="entry name" value="FUMARATE_LYASES"/>
    <property type="match status" value="1"/>
</dbReference>
<keyword id="KW-0028">Amino-acid biosynthesis</keyword>
<keyword id="KW-0055">Arginine biosynthesis</keyword>
<keyword id="KW-0963">Cytoplasm</keyword>
<keyword id="KW-0456">Lyase</keyword>
<keyword id="KW-1185">Reference proteome</keyword>
<gene>
    <name evidence="1" type="primary">argH</name>
    <name type="ordered locus">P9301_00111</name>
</gene>
<sequence length="459" mass="52054">MAKVWSKRFDNALDPFIEKFNASIGFDKKLILEDLDCSIAHAKMLGKTKVLSPSETLQIINGLESIKVEYLEGKFSPSLPSEDIHYCIEHKLISLIGETGKKLHTGRSRNDQVGTDIRLWLRKEIDNIEILIADLQKSFLNLAKANIYTLIPGYTHMQRAQPLSLAHHLLAYIEMLQRDRERFKEVRGRVNISPLGAAALAGTKIKIDRHFTAAELGFEKIYKNSIDAVSDRDFCIEFVSTSALLMSHLSKISEEIILWVTDEFSFAKLTDKCATGSSLMPQKKNPDVPELIRGKTGRVYGHLQALLTMVKGVPLSYNKDFQEDKEPIFDTAETISSCITAMTILLNEGIEFNIQNLSDSVENDFSNATDLADYLVSKDVPFRTAYQVVGEIVKYCLKRKMLFKNLKIDEFKKFHPEFDEDVFVDLKPFNVVKSRNSEGGTGFAQVEKEVKNWQKKLSI</sequence>
<protein>
    <recommendedName>
        <fullName evidence="1">Argininosuccinate lyase</fullName>
        <shortName evidence="1">ASAL</shortName>
        <ecNumber evidence="1">4.3.2.1</ecNumber>
    </recommendedName>
    <alternativeName>
        <fullName evidence="1">Arginosuccinase</fullName>
    </alternativeName>
</protein>
<accession>A3PA59</accession>
<feature type="chain" id="PRO_1000000518" description="Argininosuccinate lyase">
    <location>
        <begin position="1"/>
        <end position="459"/>
    </location>
</feature>